<protein>
    <recommendedName>
        <fullName>Larval serum protein 2</fullName>
        <shortName>LSP-2</shortName>
    </recommendedName>
    <alternativeName>
        <fullName>Hexamerin-2</fullName>
    </alternativeName>
</protein>
<accession>Q24388</accession>
<accession>Q9VTT8</accession>
<sequence length="701" mass="83349">MKSFTVIALAAVALLATLGQAKHLDSKVADKDFLMKQKFMYQILQHIYQDDVFTTPFGGSYVEYKPWEHVADYVHPEMLEHFFELWQHQPFTDDMVWSVMYDKHEEYVVGLVRLFYFAKNWETFQHVVYWARQHVNKQLFVYAVTIASLFRDDMQGVVLPAHYEIHPWSYFDSQALEWAEHYKMHGFHHVKQMDNIYNVVIRTNYSNVHGSLNYDHDLAYYLEDVGFNAFYYYFNLDYPFWTKGGEEHVLNKDRRGELYLYVHWQLLARWYLERLSHDLGEVPAFNMYVPTESGYASNLRTYYGVPQWHRENHHSFYHEHNYEHIEHVEMYTQRVMDWIHKNEKFDVETINVLGNIIQGNADSVDKKFYGSLDKLYRFIVNEGHHYGHGDESFPGLFMHYDTSMRDPIFYEVYKTIVSHYWHLMETYPEYHKKDYAFEGVHIDAVHMPESLTTYFEHFDSDISNAVNVEPAVEGSADPLYTFGRNSHYKGSSYVIKARQQRLNHKPFEFTLDVTSDKAQDAVVKVFIGPKYDEHGHEIPLEHNYQNFFELEHFKVHLEAGVNHIKRASGDFSFWVNDRTTYLELYQKLMDATNSDYKFKLDQSEAHCGVPNRMMLPRGKKGGQVFQFFYMVYPYHQPEVAQFTGYDPVVSCGVGHGSRYVDALPFGFPFNRPVKHDYYFDVHNFKFVDVKIFHRDEHTNVV</sequence>
<name>LSP2_DROME</name>
<evidence type="ECO:0000250" key="1"/>
<evidence type="ECO:0000255" key="2"/>
<evidence type="ECO:0000305" key="3"/>
<reference key="1">
    <citation type="journal article" date="1997" name="Eur. J. Biochem.">
        <title>Sequence, structure and evolution of the ecdysone-inducible Lsp-2 gene of Drosophila melanogaster.</title>
        <authorList>
            <person name="Mousseron-Grall S."/>
            <person name="Kejzlarova-Lepesant J."/>
            <person name="Burmester T."/>
            <person name="Chihara C."/>
            <person name="Barray M."/>
            <person name="Delain E."/>
            <person name="Pictet R."/>
            <person name="Lepesant J.-A."/>
        </authorList>
    </citation>
    <scope>NUCLEOTIDE SEQUENCE [GENOMIC DNA]</scope>
    <source>
        <strain>Canton-S</strain>
    </source>
</reference>
<reference key="2">
    <citation type="journal article" date="2000" name="Science">
        <title>The genome sequence of Drosophila melanogaster.</title>
        <authorList>
            <person name="Adams M.D."/>
            <person name="Celniker S.E."/>
            <person name="Holt R.A."/>
            <person name="Evans C.A."/>
            <person name="Gocayne J.D."/>
            <person name="Amanatides P.G."/>
            <person name="Scherer S.E."/>
            <person name="Li P.W."/>
            <person name="Hoskins R.A."/>
            <person name="Galle R.F."/>
            <person name="George R.A."/>
            <person name="Lewis S.E."/>
            <person name="Richards S."/>
            <person name="Ashburner M."/>
            <person name="Henderson S.N."/>
            <person name="Sutton G.G."/>
            <person name="Wortman J.R."/>
            <person name="Yandell M.D."/>
            <person name="Zhang Q."/>
            <person name="Chen L.X."/>
            <person name="Brandon R.C."/>
            <person name="Rogers Y.-H.C."/>
            <person name="Blazej R.G."/>
            <person name="Champe M."/>
            <person name="Pfeiffer B.D."/>
            <person name="Wan K.H."/>
            <person name="Doyle C."/>
            <person name="Baxter E.G."/>
            <person name="Helt G."/>
            <person name="Nelson C.R."/>
            <person name="Miklos G.L.G."/>
            <person name="Abril J.F."/>
            <person name="Agbayani A."/>
            <person name="An H.-J."/>
            <person name="Andrews-Pfannkoch C."/>
            <person name="Baldwin D."/>
            <person name="Ballew R.M."/>
            <person name="Basu A."/>
            <person name="Baxendale J."/>
            <person name="Bayraktaroglu L."/>
            <person name="Beasley E.M."/>
            <person name="Beeson K.Y."/>
            <person name="Benos P.V."/>
            <person name="Berman B.P."/>
            <person name="Bhandari D."/>
            <person name="Bolshakov S."/>
            <person name="Borkova D."/>
            <person name="Botchan M.R."/>
            <person name="Bouck J."/>
            <person name="Brokstein P."/>
            <person name="Brottier P."/>
            <person name="Burtis K.C."/>
            <person name="Busam D.A."/>
            <person name="Butler H."/>
            <person name="Cadieu E."/>
            <person name="Center A."/>
            <person name="Chandra I."/>
            <person name="Cherry J.M."/>
            <person name="Cawley S."/>
            <person name="Dahlke C."/>
            <person name="Davenport L.B."/>
            <person name="Davies P."/>
            <person name="de Pablos B."/>
            <person name="Delcher A."/>
            <person name="Deng Z."/>
            <person name="Mays A.D."/>
            <person name="Dew I."/>
            <person name="Dietz S.M."/>
            <person name="Dodson K."/>
            <person name="Doup L.E."/>
            <person name="Downes M."/>
            <person name="Dugan-Rocha S."/>
            <person name="Dunkov B.C."/>
            <person name="Dunn P."/>
            <person name="Durbin K.J."/>
            <person name="Evangelista C.C."/>
            <person name="Ferraz C."/>
            <person name="Ferriera S."/>
            <person name="Fleischmann W."/>
            <person name="Fosler C."/>
            <person name="Gabrielian A.E."/>
            <person name="Garg N.S."/>
            <person name="Gelbart W.M."/>
            <person name="Glasser K."/>
            <person name="Glodek A."/>
            <person name="Gong F."/>
            <person name="Gorrell J.H."/>
            <person name="Gu Z."/>
            <person name="Guan P."/>
            <person name="Harris M."/>
            <person name="Harris N.L."/>
            <person name="Harvey D.A."/>
            <person name="Heiman T.J."/>
            <person name="Hernandez J.R."/>
            <person name="Houck J."/>
            <person name="Hostin D."/>
            <person name="Houston K.A."/>
            <person name="Howland T.J."/>
            <person name="Wei M.-H."/>
            <person name="Ibegwam C."/>
            <person name="Jalali M."/>
            <person name="Kalush F."/>
            <person name="Karpen G.H."/>
            <person name="Ke Z."/>
            <person name="Kennison J.A."/>
            <person name="Ketchum K.A."/>
            <person name="Kimmel B.E."/>
            <person name="Kodira C.D."/>
            <person name="Kraft C.L."/>
            <person name="Kravitz S."/>
            <person name="Kulp D."/>
            <person name="Lai Z."/>
            <person name="Lasko P."/>
            <person name="Lei Y."/>
            <person name="Levitsky A.A."/>
            <person name="Li J.H."/>
            <person name="Li Z."/>
            <person name="Liang Y."/>
            <person name="Lin X."/>
            <person name="Liu X."/>
            <person name="Mattei B."/>
            <person name="McIntosh T.C."/>
            <person name="McLeod M.P."/>
            <person name="McPherson D."/>
            <person name="Merkulov G."/>
            <person name="Milshina N.V."/>
            <person name="Mobarry C."/>
            <person name="Morris J."/>
            <person name="Moshrefi A."/>
            <person name="Mount S.M."/>
            <person name="Moy M."/>
            <person name="Murphy B."/>
            <person name="Murphy L."/>
            <person name="Muzny D.M."/>
            <person name="Nelson D.L."/>
            <person name="Nelson D.R."/>
            <person name="Nelson K.A."/>
            <person name="Nixon K."/>
            <person name="Nusskern D.R."/>
            <person name="Pacleb J.M."/>
            <person name="Palazzolo M."/>
            <person name="Pittman G.S."/>
            <person name="Pan S."/>
            <person name="Pollard J."/>
            <person name="Puri V."/>
            <person name="Reese M.G."/>
            <person name="Reinert K."/>
            <person name="Remington K."/>
            <person name="Saunders R.D.C."/>
            <person name="Scheeler F."/>
            <person name="Shen H."/>
            <person name="Shue B.C."/>
            <person name="Siden-Kiamos I."/>
            <person name="Simpson M."/>
            <person name="Skupski M.P."/>
            <person name="Smith T.J."/>
            <person name="Spier E."/>
            <person name="Spradling A.C."/>
            <person name="Stapleton M."/>
            <person name="Strong R."/>
            <person name="Sun E."/>
            <person name="Svirskas R."/>
            <person name="Tector C."/>
            <person name="Turner R."/>
            <person name="Venter E."/>
            <person name="Wang A.H."/>
            <person name="Wang X."/>
            <person name="Wang Z.-Y."/>
            <person name="Wassarman D.A."/>
            <person name="Weinstock G.M."/>
            <person name="Weissenbach J."/>
            <person name="Williams S.M."/>
            <person name="Woodage T."/>
            <person name="Worley K.C."/>
            <person name="Wu D."/>
            <person name="Yang S."/>
            <person name="Yao Q.A."/>
            <person name="Ye J."/>
            <person name="Yeh R.-F."/>
            <person name="Zaveri J.S."/>
            <person name="Zhan M."/>
            <person name="Zhang G."/>
            <person name="Zhao Q."/>
            <person name="Zheng L."/>
            <person name="Zheng X.H."/>
            <person name="Zhong F.N."/>
            <person name="Zhong W."/>
            <person name="Zhou X."/>
            <person name="Zhu S.C."/>
            <person name="Zhu X."/>
            <person name="Smith H.O."/>
            <person name="Gibbs R.A."/>
            <person name="Myers E.W."/>
            <person name="Rubin G.M."/>
            <person name="Venter J.C."/>
        </authorList>
    </citation>
    <scope>NUCLEOTIDE SEQUENCE [LARGE SCALE GENOMIC DNA]</scope>
    <source>
        <strain>Berkeley</strain>
    </source>
</reference>
<reference key="3">
    <citation type="journal article" date="2002" name="Genome Biol.">
        <title>Annotation of the Drosophila melanogaster euchromatic genome: a systematic review.</title>
        <authorList>
            <person name="Misra S."/>
            <person name="Crosby M.A."/>
            <person name="Mungall C.J."/>
            <person name="Matthews B.B."/>
            <person name="Campbell K.S."/>
            <person name="Hradecky P."/>
            <person name="Huang Y."/>
            <person name="Kaminker J.S."/>
            <person name="Millburn G.H."/>
            <person name="Prochnik S.E."/>
            <person name="Smith C.D."/>
            <person name="Tupy J.L."/>
            <person name="Whitfield E.J."/>
            <person name="Bayraktaroglu L."/>
            <person name="Berman B.P."/>
            <person name="Bettencourt B.R."/>
            <person name="Celniker S.E."/>
            <person name="de Grey A.D.N.J."/>
            <person name="Drysdale R.A."/>
            <person name="Harris N.L."/>
            <person name="Richter J."/>
            <person name="Russo S."/>
            <person name="Schroeder A.J."/>
            <person name="Shu S.Q."/>
            <person name="Stapleton M."/>
            <person name="Yamada C."/>
            <person name="Ashburner M."/>
            <person name="Gelbart W.M."/>
            <person name="Rubin G.M."/>
            <person name="Lewis S.E."/>
        </authorList>
    </citation>
    <scope>GENOME REANNOTATION</scope>
    <source>
        <strain>Berkeley</strain>
    </source>
</reference>
<reference key="4">
    <citation type="journal article" date="2002" name="Genome Biol.">
        <title>A Drosophila full-length cDNA resource.</title>
        <authorList>
            <person name="Stapleton M."/>
            <person name="Carlson J.W."/>
            <person name="Brokstein P."/>
            <person name="Yu C."/>
            <person name="Champe M."/>
            <person name="George R.A."/>
            <person name="Guarin H."/>
            <person name="Kronmiller B."/>
            <person name="Pacleb J.M."/>
            <person name="Park S."/>
            <person name="Wan K.H."/>
            <person name="Rubin G.M."/>
            <person name="Celniker S.E."/>
        </authorList>
    </citation>
    <scope>NUCLEOTIDE SEQUENCE [LARGE SCALE MRNA]</scope>
    <source>
        <strain>Berkeley</strain>
        <tissue>Larva</tissue>
        <tissue>Pupae</tissue>
    </source>
</reference>
<feature type="signal peptide" evidence="2">
    <location>
        <begin position="1"/>
        <end position="21"/>
    </location>
</feature>
<feature type="chain" id="PRO_0000013336" description="Larval serum protein 2">
    <location>
        <begin position="22"/>
        <end position="701"/>
    </location>
</feature>
<feature type="glycosylation site" description="N-linked (GlcNAc...) asparagine" evidence="2">
    <location>
        <position position="204"/>
    </location>
</feature>
<feature type="sequence conflict" description="In Ref. 1; CAA66371." evidence="3" ref="1">
    <original>Y</original>
    <variation>H</variation>
    <location>
        <position position="271"/>
    </location>
</feature>
<feature type="sequence conflict" description="In Ref. 1; CAA66371." evidence="3" ref="1">
    <original>V</original>
    <variation>L</variation>
    <location>
        <position position="335"/>
    </location>
</feature>
<organism>
    <name type="scientific">Drosophila melanogaster</name>
    <name type="common">Fruit fly</name>
    <dbReference type="NCBI Taxonomy" id="7227"/>
    <lineage>
        <taxon>Eukaryota</taxon>
        <taxon>Metazoa</taxon>
        <taxon>Ecdysozoa</taxon>
        <taxon>Arthropoda</taxon>
        <taxon>Hexapoda</taxon>
        <taxon>Insecta</taxon>
        <taxon>Pterygota</taxon>
        <taxon>Neoptera</taxon>
        <taxon>Endopterygota</taxon>
        <taxon>Diptera</taxon>
        <taxon>Brachycera</taxon>
        <taxon>Muscomorpha</taxon>
        <taxon>Ephydroidea</taxon>
        <taxon>Drosophilidae</taxon>
        <taxon>Drosophila</taxon>
        <taxon>Sophophora</taxon>
    </lineage>
</organism>
<comment type="function">
    <text evidence="1">Larval storage protein (LSP) which may serve as a store of amino acids for synthesis of adult proteins.</text>
</comment>
<comment type="subunit">
    <text>Homohexamer.</text>
</comment>
<comment type="subcellular location">
    <subcellularLocation>
        <location>Secreted</location>
        <location>Extracellular space</location>
    </subcellularLocation>
</comment>
<comment type="similarity">
    <text evidence="3">Belongs to the hemocyanin family.</text>
</comment>
<comment type="sequence caution" evidence="3">
    <conflict type="frameshift">
        <sequence resource="EMBL-CDS" id="CAA66371"/>
    </conflict>
</comment>
<dbReference type="EMBL" id="X97770">
    <property type="protein sequence ID" value="CAA66371.1"/>
    <property type="status" value="ALT_FRAME"/>
    <property type="molecule type" value="Genomic_DNA"/>
</dbReference>
<dbReference type="EMBL" id="AE014296">
    <property type="protein sequence ID" value="AAF49958.1"/>
    <property type="molecule type" value="Genomic_DNA"/>
</dbReference>
<dbReference type="EMBL" id="AY119005">
    <property type="protein sequence ID" value="AAM50865.1"/>
    <property type="molecule type" value="mRNA"/>
</dbReference>
<dbReference type="RefSeq" id="NP_001287042.1">
    <property type="nucleotide sequence ID" value="NM_001300113.1"/>
</dbReference>
<dbReference type="RefSeq" id="NP_524816.1">
    <property type="nucleotide sequence ID" value="NM_080077.2"/>
</dbReference>
<dbReference type="SMR" id="Q24388"/>
<dbReference type="BioGRID" id="69593">
    <property type="interactions" value="30"/>
</dbReference>
<dbReference type="FunCoup" id="Q24388">
    <property type="interactions" value="2"/>
</dbReference>
<dbReference type="IntAct" id="Q24388">
    <property type="interactions" value="29"/>
</dbReference>
<dbReference type="STRING" id="7227.FBpp0311507"/>
<dbReference type="GlyCosmos" id="Q24388">
    <property type="glycosylation" value="1 site, No reported glycans"/>
</dbReference>
<dbReference type="GlyGen" id="Q24388">
    <property type="glycosylation" value="3 sites, 1 O-linked glycan (1 site)"/>
</dbReference>
<dbReference type="PaxDb" id="7227-FBpp0088363"/>
<dbReference type="DNASU" id="45326"/>
<dbReference type="EnsemblMetazoa" id="FBtr0089324">
    <property type="protein sequence ID" value="FBpp0088363"/>
    <property type="gene ID" value="FBgn0002565"/>
</dbReference>
<dbReference type="EnsemblMetazoa" id="FBtr0345352">
    <property type="protein sequence ID" value="FBpp0311507"/>
    <property type="gene ID" value="FBgn0002565"/>
</dbReference>
<dbReference type="GeneID" id="45326"/>
<dbReference type="KEGG" id="dme:Dmel_CG6806"/>
<dbReference type="AGR" id="FB:FBgn0002565"/>
<dbReference type="CTD" id="45326"/>
<dbReference type="FlyBase" id="FBgn0002565">
    <property type="gene designation" value="Lsp2"/>
</dbReference>
<dbReference type="VEuPathDB" id="VectorBase:FBgn0002565"/>
<dbReference type="eggNOG" id="ENOG502QR98">
    <property type="taxonomic scope" value="Eukaryota"/>
</dbReference>
<dbReference type="HOGENOM" id="CLU_012213_1_0_1"/>
<dbReference type="InParanoid" id="Q24388"/>
<dbReference type="OMA" id="HPWSFFD"/>
<dbReference type="OrthoDB" id="6371642at2759"/>
<dbReference type="PhylomeDB" id="Q24388"/>
<dbReference type="SignaLink" id="Q24388"/>
<dbReference type="BioGRID-ORCS" id="45326">
    <property type="hits" value="0 hits in 1 CRISPR screen"/>
</dbReference>
<dbReference type="ChiTaRS" id="Lsp2">
    <property type="organism name" value="fly"/>
</dbReference>
<dbReference type="GenomeRNAi" id="45326"/>
<dbReference type="PRO" id="PR:Q24388"/>
<dbReference type="Proteomes" id="UP000000803">
    <property type="component" value="Chromosome 3L"/>
</dbReference>
<dbReference type="Bgee" id="FBgn0002565">
    <property type="expression patterns" value="Expressed in fat body cell in testis and 42 other cell types or tissues"/>
</dbReference>
<dbReference type="ExpressionAtlas" id="Q24388">
    <property type="expression patterns" value="baseline and differential"/>
</dbReference>
<dbReference type="GO" id="GO:0005615">
    <property type="term" value="C:extracellular space"/>
    <property type="evidence" value="ECO:0000314"/>
    <property type="project" value="FlyBase"/>
</dbReference>
<dbReference type="GO" id="GO:0005616">
    <property type="term" value="C:larval serum protein complex"/>
    <property type="evidence" value="ECO:0000314"/>
    <property type="project" value="FlyBase"/>
</dbReference>
<dbReference type="GO" id="GO:0045735">
    <property type="term" value="F:nutrient reservoir activity"/>
    <property type="evidence" value="ECO:0000315"/>
    <property type="project" value="FlyBase"/>
</dbReference>
<dbReference type="GO" id="GO:0097009">
    <property type="term" value="P:energy homeostasis"/>
    <property type="evidence" value="ECO:0000315"/>
    <property type="project" value="FlyBase"/>
</dbReference>
<dbReference type="GO" id="GO:0008045">
    <property type="term" value="P:motor neuron axon guidance"/>
    <property type="evidence" value="ECO:0000315"/>
    <property type="project" value="FlyBase"/>
</dbReference>
<dbReference type="GO" id="GO:0016201">
    <property type="term" value="P:synaptic target inhibition"/>
    <property type="evidence" value="ECO:0000315"/>
    <property type="project" value="FlyBase"/>
</dbReference>
<dbReference type="FunFam" id="1.10.1280.10:FF:000010">
    <property type="entry name" value="Larval serum protein 2"/>
    <property type="match status" value="1"/>
</dbReference>
<dbReference type="FunFam" id="2.60.40.1520:FF:000002">
    <property type="entry name" value="Larval serum protein 2"/>
    <property type="match status" value="1"/>
</dbReference>
<dbReference type="Gene3D" id="1.10.1280.10">
    <property type="entry name" value="Di-copper center containing domain from catechol oxidase"/>
    <property type="match status" value="1"/>
</dbReference>
<dbReference type="Gene3D" id="2.60.40.1520">
    <property type="entry name" value="Hemocyanin, C-terminal domain"/>
    <property type="match status" value="1"/>
</dbReference>
<dbReference type="Gene3D" id="1.20.1370.10">
    <property type="entry name" value="Hemocyanin, N-terminal domain"/>
    <property type="match status" value="1"/>
</dbReference>
<dbReference type="InterPro" id="IPR008922">
    <property type="entry name" value="Di-copper_centre_dom_sf"/>
</dbReference>
<dbReference type="InterPro" id="IPR013788">
    <property type="entry name" value="Hemocyanin/hexamerin"/>
</dbReference>
<dbReference type="InterPro" id="IPR000896">
    <property type="entry name" value="Hemocyanin/hexamerin_mid_dom"/>
</dbReference>
<dbReference type="InterPro" id="IPR005203">
    <property type="entry name" value="Hemocyanin_C"/>
</dbReference>
<dbReference type="InterPro" id="IPR037020">
    <property type="entry name" value="Hemocyanin_C_sf"/>
</dbReference>
<dbReference type="InterPro" id="IPR005204">
    <property type="entry name" value="Hemocyanin_N"/>
</dbReference>
<dbReference type="InterPro" id="IPR036697">
    <property type="entry name" value="Hemocyanin_N_sf"/>
</dbReference>
<dbReference type="InterPro" id="IPR014756">
    <property type="entry name" value="Ig_E-set"/>
</dbReference>
<dbReference type="PANTHER" id="PTHR11511:SF5">
    <property type="entry name" value="FAT-BODY PROTEIN 1-RELATED"/>
    <property type="match status" value="1"/>
</dbReference>
<dbReference type="PANTHER" id="PTHR11511">
    <property type="entry name" value="LARVAL STORAGE PROTEIN/PHENOLOXIDASE"/>
    <property type="match status" value="1"/>
</dbReference>
<dbReference type="Pfam" id="PF03723">
    <property type="entry name" value="Hemocyanin_C"/>
    <property type="match status" value="1"/>
</dbReference>
<dbReference type="Pfam" id="PF00372">
    <property type="entry name" value="Hemocyanin_M"/>
    <property type="match status" value="1"/>
</dbReference>
<dbReference type="Pfam" id="PF03722">
    <property type="entry name" value="Hemocyanin_N"/>
    <property type="match status" value="1"/>
</dbReference>
<dbReference type="PRINTS" id="PR00187">
    <property type="entry name" value="HAEMOCYANIN"/>
</dbReference>
<dbReference type="SUPFAM" id="SSF48056">
    <property type="entry name" value="Di-copper centre-containing domain"/>
    <property type="match status" value="1"/>
</dbReference>
<dbReference type="SUPFAM" id="SSF81296">
    <property type="entry name" value="E set domains"/>
    <property type="match status" value="1"/>
</dbReference>
<dbReference type="SUPFAM" id="SSF48050">
    <property type="entry name" value="Hemocyanin, N-terminal domain"/>
    <property type="match status" value="1"/>
</dbReference>
<dbReference type="PROSITE" id="PS00210">
    <property type="entry name" value="HEMOCYANIN_2"/>
    <property type="match status" value="1"/>
</dbReference>
<gene>
    <name type="primary">Lsp2</name>
    <name type="ORF">CG6806</name>
</gene>
<keyword id="KW-0325">Glycoprotein</keyword>
<keyword id="KW-1185">Reference proteome</keyword>
<keyword id="KW-0964">Secreted</keyword>
<keyword id="KW-0732">Signal</keyword>
<keyword id="KW-0758">Storage protein</keyword>
<proteinExistence type="evidence at transcript level"/>